<protein>
    <recommendedName>
        <fullName evidence="1">Large ribosomal subunit protein bL35</fullName>
    </recommendedName>
    <alternativeName>
        <fullName evidence="3">50S ribosomal protein L35</fullName>
    </alternativeName>
</protein>
<feature type="chain" id="PRO_0000258635" description="Large ribosomal subunit protein bL35">
    <location>
        <begin position="1"/>
        <end position="66"/>
    </location>
</feature>
<feature type="region of interest" description="Disordered" evidence="2">
    <location>
        <begin position="1"/>
        <end position="26"/>
    </location>
</feature>
<keyword id="KW-0687">Ribonucleoprotein</keyword>
<keyword id="KW-0689">Ribosomal protein</keyword>
<accession>Q633M2</accession>
<dbReference type="EMBL" id="CP000001">
    <property type="protein sequence ID" value="AAU15952.1"/>
    <property type="molecule type" value="Genomic_DNA"/>
</dbReference>
<dbReference type="RefSeq" id="WP_001125945.1">
    <property type="nucleotide sequence ID" value="NZ_CP009968.1"/>
</dbReference>
<dbReference type="SMR" id="Q633M2"/>
<dbReference type="GeneID" id="93006536"/>
<dbReference type="KEGG" id="bcz:BCE33L4316"/>
<dbReference type="PATRIC" id="fig|288681.22.peg.1058"/>
<dbReference type="Proteomes" id="UP000002612">
    <property type="component" value="Chromosome"/>
</dbReference>
<dbReference type="GO" id="GO:0022625">
    <property type="term" value="C:cytosolic large ribosomal subunit"/>
    <property type="evidence" value="ECO:0007669"/>
    <property type="project" value="TreeGrafter"/>
</dbReference>
<dbReference type="GO" id="GO:0003735">
    <property type="term" value="F:structural constituent of ribosome"/>
    <property type="evidence" value="ECO:0007669"/>
    <property type="project" value="InterPro"/>
</dbReference>
<dbReference type="GO" id="GO:0006412">
    <property type="term" value="P:translation"/>
    <property type="evidence" value="ECO:0007669"/>
    <property type="project" value="UniProtKB-UniRule"/>
</dbReference>
<dbReference type="FunFam" id="4.10.410.60:FF:000001">
    <property type="entry name" value="50S ribosomal protein L35"/>
    <property type="match status" value="1"/>
</dbReference>
<dbReference type="Gene3D" id="4.10.410.60">
    <property type="match status" value="1"/>
</dbReference>
<dbReference type="HAMAP" id="MF_00514">
    <property type="entry name" value="Ribosomal_bL35"/>
    <property type="match status" value="1"/>
</dbReference>
<dbReference type="InterPro" id="IPR001706">
    <property type="entry name" value="Ribosomal_bL35"/>
</dbReference>
<dbReference type="InterPro" id="IPR021137">
    <property type="entry name" value="Ribosomal_bL35-like"/>
</dbReference>
<dbReference type="InterPro" id="IPR018265">
    <property type="entry name" value="Ribosomal_bL35_CS"/>
</dbReference>
<dbReference type="InterPro" id="IPR037229">
    <property type="entry name" value="Ribosomal_bL35_sf"/>
</dbReference>
<dbReference type="NCBIfam" id="TIGR00001">
    <property type="entry name" value="rpmI_bact"/>
    <property type="match status" value="1"/>
</dbReference>
<dbReference type="PANTHER" id="PTHR33343">
    <property type="entry name" value="54S RIBOSOMAL PROTEIN BL35M"/>
    <property type="match status" value="1"/>
</dbReference>
<dbReference type="PANTHER" id="PTHR33343:SF1">
    <property type="entry name" value="LARGE RIBOSOMAL SUBUNIT PROTEIN BL35M"/>
    <property type="match status" value="1"/>
</dbReference>
<dbReference type="Pfam" id="PF01632">
    <property type="entry name" value="Ribosomal_L35p"/>
    <property type="match status" value="1"/>
</dbReference>
<dbReference type="PRINTS" id="PR00064">
    <property type="entry name" value="RIBOSOMALL35"/>
</dbReference>
<dbReference type="SUPFAM" id="SSF143034">
    <property type="entry name" value="L35p-like"/>
    <property type="match status" value="1"/>
</dbReference>
<dbReference type="PROSITE" id="PS00936">
    <property type="entry name" value="RIBOSOMAL_L35"/>
    <property type="match status" value="1"/>
</dbReference>
<organism>
    <name type="scientific">Bacillus cereus (strain ZK / E33L)</name>
    <dbReference type="NCBI Taxonomy" id="288681"/>
    <lineage>
        <taxon>Bacteria</taxon>
        <taxon>Bacillati</taxon>
        <taxon>Bacillota</taxon>
        <taxon>Bacilli</taxon>
        <taxon>Bacillales</taxon>
        <taxon>Bacillaceae</taxon>
        <taxon>Bacillus</taxon>
        <taxon>Bacillus cereus group</taxon>
    </lineage>
</organism>
<sequence>MPKQKTHRGAAKRFKKTGSGKLKRSHAYTSHLFANKSTKAKRKLRKAGVVSAGDFKRIRQMLDNLK</sequence>
<evidence type="ECO:0000255" key="1">
    <source>
        <dbReference type="HAMAP-Rule" id="MF_00514"/>
    </source>
</evidence>
<evidence type="ECO:0000256" key="2">
    <source>
        <dbReference type="SAM" id="MobiDB-lite"/>
    </source>
</evidence>
<evidence type="ECO:0000305" key="3"/>
<gene>
    <name evidence="1" type="primary">rpmI</name>
    <name type="ordered locus">BCE33L4316</name>
</gene>
<reference key="1">
    <citation type="journal article" date="2006" name="J. Bacteriol.">
        <title>Pathogenomic sequence analysis of Bacillus cereus and Bacillus thuringiensis isolates closely related to Bacillus anthracis.</title>
        <authorList>
            <person name="Han C.S."/>
            <person name="Xie G."/>
            <person name="Challacombe J.F."/>
            <person name="Altherr M.R."/>
            <person name="Bhotika S.S."/>
            <person name="Bruce D."/>
            <person name="Campbell C.S."/>
            <person name="Campbell M.L."/>
            <person name="Chen J."/>
            <person name="Chertkov O."/>
            <person name="Cleland C."/>
            <person name="Dimitrijevic M."/>
            <person name="Doggett N.A."/>
            <person name="Fawcett J.J."/>
            <person name="Glavina T."/>
            <person name="Goodwin L.A."/>
            <person name="Hill K.K."/>
            <person name="Hitchcock P."/>
            <person name="Jackson P.J."/>
            <person name="Keim P."/>
            <person name="Kewalramani A.R."/>
            <person name="Longmire J."/>
            <person name="Lucas S."/>
            <person name="Malfatti S."/>
            <person name="McMurry K."/>
            <person name="Meincke L.J."/>
            <person name="Misra M."/>
            <person name="Moseman B.L."/>
            <person name="Mundt M."/>
            <person name="Munk A.C."/>
            <person name="Okinaka R.T."/>
            <person name="Parson-Quintana B."/>
            <person name="Reilly L.P."/>
            <person name="Richardson P."/>
            <person name="Robinson D.L."/>
            <person name="Rubin E."/>
            <person name="Saunders E."/>
            <person name="Tapia R."/>
            <person name="Tesmer J.G."/>
            <person name="Thayer N."/>
            <person name="Thompson L.S."/>
            <person name="Tice H."/>
            <person name="Ticknor L.O."/>
            <person name="Wills P.L."/>
            <person name="Brettin T.S."/>
            <person name="Gilna P."/>
        </authorList>
    </citation>
    <scope>NUCLEOTIDE SEQUENCE [LARGE SCALE GENOMIC DNA]</scope>
    <source>
        <strain>ZK / E33L</strain>
    </source>
</reference>
<name>RL35_BACCZ</name>
<proteinExistence type="inferred from homology"/>
<comment type="similarity">
    <text evidence="1">Belongs to the bacterial ribosomal protein bL35 family.</text>
</comment>